<reference key="1">
    <citation type="submission" date="2008-10" db="EMBL/GenBank/DDBJ databases">
        <title>Genome sequence of Bacillus cereus AH820.</title>
        <authorList>
            <person name="Dodson R.J."/>
            <person name="Durkin A.S."/>
            <person name="Rosovitz M.J."/>
            <person name="Rasko D.A."/>
            <person name="Hoffmaster A."/>
            <person name="Ravel J."/>
            <person name="Sutton G."/>
        </authorList>
    </citation>
    <scope>NUCLEOTIDE SEQUENCE [LARGE SCALE GENOMIC DNA]</scope>
    <source>
        <strain>AH820</strain>
    </source>
</reference>
<proteinExistence type="inferred from homology"/>
<organism>
    <name type="scientific">Bacillus cereus (strain AH820)</name>
    <dbReference type="NCBI Taxonomy" id="405535"/>
    <lineage>
        <taxon>Bacteria</taxon>
        <taxon>Bacillati</taxon>
        <taxon>Bacillota</taxon>
        <taxon>Bacilli</taxon>
        <taxon>Bacillales</taxon>
        <taxon>Bacillaceae</taxon>
        <taxon>Bacillus</taxon>
        <taxon>Bacillus cereus group</taxon>
    </lineage>
</organism>
<comment type="function">
    <text evidence="1">Catalyzes the ATP-dependent conversion of 7-carboxy-7-deazaguanine (CDG) to 7-cyano-7-deazaguanine (preQ(0)).</text>
</comment>
<comment type="catalytic activity">
    <reaction evidence="1">
        <text>7-carboxy-7-deazaguanine + NH4(+) + ATP = 7-cyano-7-deazaguanine + ADP + phosphate + H2O + H(+)</text>
        <dbReference type="Rhea" id="RHEA:27982"/>
        <dbReference type="ChEBI" id="CHEBI:15377"/>
        <dbReference type="ChEBI" id="CHEBI:15378"/>
        <dbReference type="ChEBI" id="CHEBI:28938"/>
        <dbReference type="ChEBI" id="CHEBI:30616"/>
        <dbReference type="ChEBI" id="CHEBI:43474"/>
        <dbReference type="ChEBI" id="CHEBI:45075"/>
        <dbReference type="ChEBI" id="CHEBI:61036"/>
        <dbReference type="ChEBI" id="CHEBI:456216"/>
        <dbReference type="EC" id="6.3.4.20"/>
    </reaction>
</comment>
<comment type="cofactor">
    <cofactor evidence="1">
        <name>Zn(2+)</name>
        <dbReference type="ChEBI" id="CHEBI:29105"/>
    </cofactor>
    <text evidence="1">Binds 1 zinc ion per subunit.</text>
</comment>
<comment type="pathway">
    <text evidence="1">Purine metabolism; 7-cyano-7-deazaguanine biosynthesis.</text>
</comment>
<comment type="subunit">
    <text evidence="1">Homodimer.</text>
</comment>
<comment type="similarity">
    <text evidence="1">Belongs to the QueC family.</text>
</comment>
<name>QUEC_BACC0</name>
<feature type="chain" id="PRO_1000186555" description="7-cyano-7-deazaguanine synthase">
    <location>
        <begin position="1"/>
        <end position="220"/>
    </location>
</feature>
<feature type="binding site" evidence="1">
    <location>
        <begin position="10"/>
        <end position="20"/>
    </location>
    <ligand>
        <name>ATP</name>
        <dbReference type="ChEBI" id="CHEBI:30616"/>
    </ligand>
</feature>
<feature type="binding site" evidence="1">
    <location>
        <position position="186"/>
    </location>
    <ligand>
        <name>Zn(2+)</name>
        <dbReference type="ChEBI" id="CHEBI:29105"/>
    </ligand>
</feature>
<feature type="binding site" evidence="1">
    <location>
        <position position="195"/>
    </location>
    <ligand>
        <name>Zn(2+)</name>
        <dbReference type="ChEBI" id="CHEBI:29105"/>
    </ligand>
</feature>
<feature type="binding site" evidence="1">
    <location>
        <position position="198"/>
    </location>
    <ligand>
        <name>Zn(2+)</name>
        <dbReference type="ChEBI" id="CHEBI:29105"/>
    </ligand>
</feature>
<feature type="binding site" evidence="1">
    <location>
        <position position="201"/>
    </location>
    <ligand>
        <name>Zn(2+)</name>
        <dbReference type="ChEBI" id="CHEBI:29105"/>
    </ligand>
</feature>
<accession>B7JFS4</accession>
<gene>
    <name evidence="1" type="primary">queC</name>
    <name type="ordered locus">BCAH820_1430</name>
</gene>
<evidence type="ECO:0000255" key="1">
    <source>
        <dbReference type="HAMAP-Rule" id="MF_01633"/>
    </source>
</evidence>
<protein>
    <recommendedName>
        <fullName evidence="1">7-cyano-7-deazaguanine synthase</fullName>
        <ecNumber evidence="1">6.3.4.20</ecNumber>
    </recommendedName>
    <alternativeName>
        <fullName evidence="1">7-cyano-7-carbaguanine synthase</fullName>
    </alternativeName>
    <alternativeName>
        <fullName evidence="1">PreQ(0) synthase</fullName>
    </alternativeName>
    <alternativeName>
        <fullName evidence="1">Queuosine biosynthesis protein QueC</fullName>
    </alternativeName>
</protein>
<sequence length="220" mass="24541">MKKEKAVVVFSGGQDSTTCLFWAIEQFAEVEAVTFNYNQRHKLEIDCAVEIAKELGIKHTVLDMSLLNQLAPNALTRTDMEITHEEGELPSTFVDGRNLLFLSFAAVLAKQVGARHIVTGVCETDFSGYPDCRDVFVKSLNVTLNLSMDYPFVIHTPLMWIDKAETWKLSDELGAFEFVREKTLTCYNGIIGDGCGECPACQLRKAGLDTYLQEREGASN</sequence>
<dbReference type="EC" id="6.3.4.20" evidence="1"/>
<dbReference type="EMBL" id="CP001283">
    <property type="protein sequence ID" value="ACK89096.1"/>
    <property type="molecule type" value="Genomic_DNA"/>
</dbReference>
<dbReference type="RefSeq" id="WP_000711603.1">
    <property type="nucleotide sequence ID" value="NC_011773.1"/>
</dbReference>
<dbReference type="SMR" id="B7JFS4"/>
<dbReference type="GeneID" id="45021343"/>
<dbReference type="KEGG" id="bcu:BCAH820_1430"/>
<dbReference type="HOGENOM" id="CLU_081854_0_0_9"/>
<dbReference type="UniPathway" id="UPA00391"/>
<dbReference type="Proteomes" id="UP000001363">
    <property type="component" value="Chromosome"/>
</dbReference>
<dbReference type="GO" id="GO:0005524">
    <property type="term" value="F:ATP binding"/>
    <property type="evidence" value="ECO:0007669"/>
    <property type="project" value="UniProtKB-UniRule"/>
</dbReference>
<dbReference type="GO" id="GO:0016879">
    <property type="term" value="F:ligase activity, forming carbon-nitrogen bonds"/>
    <property type="evidence" value="ECO:0007669"/>
    <property type="project" value="UniProtKB-UniRule"/>
</dbReference>
<dbReference type="GO" id="GO:0008270">
    <property type="term" value="F:zinc ion binding"/>
    <property type="evidence" value="ECO:0007669"/>
    <property type="project" value="UniProtKB-UniRule"/>
</dbReference>
<dbReference type="GO" id="GO:0008616">
    <property type="term" value="P:queuosine biosynthetic process"/>
    <property type="evidence" value="ECO:0007669"/>
    <property type="project" value="UniProtKB-UniRule"/>
</dbReference>
<dbReference type="CDD" id="cd01995">
    <property type="entry name" value="QueC-like"/>
    <property type="match status" value="1"/>
</dbReference>
<dbReference type="FunFam" id="3.40.50.620:FF:000017">
    <property type="entry name" value="7-cyano-7-deazaguanine synthase"/>
    <property type="match status" value="1"/>
</dbReference>
<dbReference type="Gene3D" id="3.40.50.620">
    <property type="entry name" value="HUPs"/>
    <property type="match status" value="1"/>
</dbReference>
<dbReference type="HAMAP" id="MF_01633">
    <property type="entry name" value="QueC"/>
    <property type="match status" value="1"/>
</dbReference>
<dbReference type="InterPro" id="IPR018317">
    <property type="entry name" value="QueC"/>
</dbReference>
<dbReference type="InterPro" id="IPR014729">
    <property type="entry name" value="Rossmann-like_a/b/a_fold"/>
</dbReference>
<dbReference type="NCBIfam" id="TIGR00364">
    <property type="entry name" value="7-cyano-7-deazaguanine synthase QueC"/>
    <property type="match status" value="1"/>
</dbReference>
<dbReference type="PANTHER" id="PTHR42914">
    <property type="entry name" value="7-CYANO-7-DEAZAGUANINE SYNTHASE"/>
    <property type="match status" value="1"/>
</dbReference>
<dbReference type="PANTHER" id="PTHR42914:SF1">
    <property type="entry name" value="7-CYANO-7-DEAZAGUANINE SYNTHASE"/>
    <property type="match status" value="1"/>
</dbReference>
<dbReference type="Pfam" id="PF06508">
    <property type="entry name" value="QueC"/>
    <property type="match status" value="1"/>
</dbReference>
<dbReference type="PIRSF" id="PIRSF006293">
    <property type="entry name" value="ExsB"/>
    <property type="match status" value="1"/>
</dbReference>
<dbReference type="SUPFAM" id="SSF52402">
    <property type="entry name" value="Adenine nucleotide alpha hydrolases-like"/>
    <property type="match status" value="1"/>
</dbReference>
<keyword id="KW-0067">ATP-binding</keyword>
<keyword id="KW-0436">Ligase</keyword>
<keyword id="KW-0479">Metal-binding</keyword>
<keyword id="KW-0547">Nucleotide-binding</keyword>
<keyword id="KW-0671">Queuosine biosynthesis</keyword>
<keyword id="KW-0862">Zinc</keyword>